<dbReference type="EC" id="1.1.1.267" evidence="1"/>
<dbReference type="EMBL" id="CP000613">
    <property type="protein sequence ID" value="ACI98616.1"/>
    <property type="molecule type" value="Genomic_DNA"/>
</dbReference>
<dbReference type="RefSeq" id="WP_012566404.1">
    <property type="nucleotide sequence ID" value="NC_011420.2"/>
</dbReference>
<dbReference type="SMR" id="B6ISU5"/>
<dbReference type="STRING" id="414684.RC1_1202"/>
<dbReference type="KEGG" id="rce:RC1_1202"/>
<dbReference type="eggNOG" id="COG0743">
    <property type="taxonomic scope" value="Bacteria"/>
</dbReference>
<dbReference type="HOGENOM" id="CLU_035714_4_0_5"/>
<dbReference type="OrthoDB" id="9806546at2"/>
<dbReference type="UniPathway" id="UPA00056">
    <property type="reaction ID" value="UER00092"/>
</dbReference>
<dbReference type="Proteomes" id="UP000001591">
    <property type="component" value="Chromosome"/>
</dbReference>
<dbReference type="GO" id="GO:0030604">
    <property type="term" value="F:1-deoxy-D-xylulose-5-phosphate reductoisomerase activity"/>
    <property type="evidence" value="ECO:0007669"/>
    <property type="project" value="UniProtKB-UniRule"/>
</dbReference>
<dbReference type="GO" id="GO:0030145">
    <property type="term" value="F:manganese ion binding"/>
    <property type="evidence" value="ECO:0007669"/>
    <property type="project" value="TreeGrafter"/>
</dbReference>
<dbReference type="GO" id="GO:0070402">
    <property type="term" value="F:NADPH binding"/>
    <property type="evidence" value="ECO:0007669"/>
    <property type="project" value="InterPro"/>
</dbReference>
<dbReference type="GO" id="GO:0051484">
    <property type="term" value="P:isopentenyl diphosphate biosynthetic process, methylerythritol 4-phosphate pathway involved in terpenoid biosynthetic process"/>
    <property type="evidence" value="ECO:0007669"/>
    <property type="project" value="TreeGrafter"/>
</dbReference>
<dbReference type="FunFam" id="3.40.50.720:FF:000045">
    <property type="entry name" value="1-deoxy-D-xylulose 5-phosphate reductoisomerase"/>
    <property type="match status" value="1"/>
</dbReference>
<dbReference type="Gene3D" id="1.10.1740.10">
    <property type="match status" value="1"/>
</dbReference>
<dbReference type="Gene3D" id="3.40.50.720">
    <property type="entry name" value="NAD(P)-binding Rossmann-like Domain"/>
    <property type="match status" value="1"/>
</dbReference>
<dbReference type="HAMAP" id="MF_00183">
    <property type="entry name" value="DXP_reductoisom"/>
    <property type="match status" value="1"/>
</dbReference>
<dbReference type="InterPro" id="IPR003821">
    <property type="entry name" value="DXP_reductoisomerase"/>
</dbReference>
<dbReference type="InterPro" id="IPR013644">
    <property type="entry name" value="DXP_reductoisomerase_C"/>
</dbReference>
<dbReference type="InterPro" id="IPR013512">
    <property type="entry name" value="DXP_reductoisomerase_N"/>
</dbReference>
<dbReference type="InterPro" id="IPR026877">
    <property type="entry name" value="DXPR_C"/>
</dbReference>
<dbReference type="InterPro" id="IPR036169">
    <property type="entry name" value="DXPR_C_sf"/>
</dbReference>
<dbReference type="InterPro" id="IPR036291">
    <property type="entry name" value="NAD(P)-bd_dom_sf"/>
</dbReference>
<dbReference type="NCBIfam" id="TIGR00243">
    <property type="entry name" value="Dxr"/>
    <property type="match status" value="1"/>
</dbReference>
<dbReference type="NCBIfam" id="NF009114">
    <property type="entry name" value="PRK12464.1"/>
    <property type="match status" value="1"/>
</dbReference>
<dbReference type="PANTHER" id="PTHR30525">
    <property type="entry name" value="1-DEOXY-D-XYLULOSE 5-PHOSPHATE REDUCTOISOMERASE"/>
    <property type="match status" value="1"/>
</dbReference>
<dbReference type="PANTHER" id="PTHR30525:SF0">
    <property type="entry name" value="1-DEOXY-D-XYLULOSE 5-PHOSPHATE REDUCTOISOMERASE, CHLOROPLASTIC"/>
    <property type="match status" value="1"/>
</dbReference>
<dbReference type="Pfam" id="PF08436">
    <property type="entry name" value="DXP_redisom_C"/>
    <property type="match status" value="1"/>
</dbReference>
<dbReference type="Pfam" id="PF02670">
    <property type="entry name" value="DXP_reductoisom"/>
    <property type="match status" value="1"/>
</dbReference>
<dbReference type="Pfam" id="PF13288">
    <property type="entry name" value="DXPR_C"/>
    <property type="match status" value="1"/>
</dbReference>
<dbReference type="PIRSF" id="PIRSF006205">
    <property type="entry name" value="Dxp_reductismrs"/>
    <property type="match status" value="1"/>
</dbReference>
<dbReference type="SUPFAM" id="SSF69055">
    <property type="entry name" value="1-deoxy-D-xylulose-5-phosphate reductoisomerase, C-terminal domain"/>
    <property type="match status" value="1"/>
</dbReference>
<dbReference type="SUPFAM" id="SSF55347">
    <property type="entry name" value="Glyceraldehyde-3-phosphate dehydrogenase-like, C-terminal domain"/>
    <property type="match status" value="1"/>
</dbReference>
<dbReference type="SUPFAM" id="SSF51735">
    <property type="entry name" value="NAD(P)-binding Rossmann-fold domains"/>
    <property type="match status" value="1"/>
</dbReference>
<keyword id="KW-0414">Isoprene biosynthesis</keyword>
<keyword id="KW-0464">Manganese</keyword>
<keyword id="KW-0479">Metal-binding</keyword>
<keyword id="KW-0521">NADP</keyword>
<keyword id="KW-0560">Oxidoreductase</keyword>
<keyword id="KW-1185">Reference proteome</keyword>
<evidence type="ECO:0000255" key="1">
    <source>
        <dbReference type="HAMAP-Rule" id="MF_00183"/>
    </source>
</evidence>
<comment type="function">
    <text evidence="1">Catalyzes the NADPH-dependent rearrangement and reduction of 1-deoxy-D-xylulose-5-phosphate (DXP) to 2-C-methyl-D-erythritol 4-phosphate (MEP).</text>
</comment>
<comment type="catalytic activity">
    <reaction evidence="1">
        <text>2-C-methyl-D-erythritol 4-phosphate + NADP(+) = 1-deoxy-D-xylulose 5-phosphate + NADPH + H(+)</text>
        <dbReference type="Rhea" id="RHEA:13717"/>
        <dbReference type="ChEBI" id="CHEBI:15378"/>
        <dbReference type="ChEBI" id="CHEBI:57783"/>
        <dbReference type="ChEBI" id="CHEBI:57792"/>
        <dbReference type="ChEBI" id="CHEBI:58262"/>
        <dbReference type="ChEBI" id="CHEBI:58349"/>
        <dbReference type="EC" id="1.1.1.267"/>
    </reaction>
    <physiologicalReaction direction="right-to-left" evidence="1">
        <dbReference type="Rhea" id="RHEA:13719"/>
    </physiologicalReaction>
</comment>
<comment type="cofactor">
    <cofactor evidence="1">
        <name>Mg(2+)</name>
        <dbReference type="ChEBI" id="CHEBI:18420"/>
    </cofactor>
    <cofactor evidence="1">
        <name>Mn(2+)</name>
        <dbReference type="ChEBI" id="CHEBI:29035"/>
    </cofactor>
</comment>
<comment type="pathway">
    <text evidence="1">Isoprenoid biosynthesis; isopentenyl diphosphate biosynthesis via DXP pathway; isopentenyl diphosphate from 1-deoxy-D-xylulose 5-phosphate: step 1/6.</text>
</comment>
<comment type="similarity">
    <text evidence="1">Belongs to the DXR family.</text>
</comment>
<sequence length="402" mass="42561">MVVSVTPRHSTGGDGIRSVTVLGSTGSVGSNTVELIEAYPERYRTVALVARRNVAALAGQARRLRPEVAVVADEAHYADLKDALAGTGIAAAAGPAAVVEAAQRPADWVMAAIVGAAGLEPTLAAARRGAIVAFANKECLVCAGELLMAEVRRHGATLLPVDSEHSAIFQVFDPERRPAVSRLILTASGGPFRTWTRERMAAATPKEACAHPNWTMGAKISVDSASMMNKGLEIIEACHLFGMPDGQIDVLVHPQSVVHSMVEYVDGSVLAQLGTPDMRTPIAVALGWPDRIATPGARLDLIKSSRLEFEAPDPLRFPALRLARHALQCGGAAPTLLNAANEVAVQAFLEERIGFLDIERVVEATLASLPHSELNDLDDVRTADADARRFASEMVAAGRGSR</sequence>
<proteinExistence type="inferred from homology"/>
<reference key="1">
    <citation type="submission" date="2007-03" db="EMBL/GenBank/DDBJ databases">
        <title>Genome sequence of Rhodospirillum centenum.</title>
        <authorList>
            <person name="Touchman J.W."/>
            <person name="Bauer C."/>
            <person name="Blankenship R.E."/>
        </authorList>
    </citation>
    <scope>NUCLEOTIDE SEQUENCE [LARGE SCALE GENOMIC DNA]</scope>
    <source>
        <strain>ATCC 51521 / SW</strain>
    </source>
</reference>
<name>DXR_RHOCS</name>
<protein>
    <recommendedName>
        <fullName evidence="1">1-deoxy-D-xylulose 5-phosphate reductoisomerase</fullName>
        <shortName evidence="1">DXP reductoisomerase</shortName>
        <ecNumber evidence="1">1.1.1.267</ecNumber>
    </recommendedName>
    <alternativeName>
        <fullName evidence="1">1-deoxyxylulose-5-phosphate reductoisomerase</fullName>
    </alternativeName>
    <alternativeName>
        <fullName evidence="1">2-C-methyl-D-erythritol 4-phosphate synthase</fullName>
    </alternativeName>
</protein>
<feature type="chain" id="PRO_1000124108" description="1-deoxy-D-xylulose 5-phosphate reductoisomerase">
    <location>
        <begin position="1"/>
        <end position="402"/>
    </location>
</feature>
<feature type="binding site" evidence="1">
    <location>
        <position position="25"/>
    </location>
    <ligand>
        <name>NADPH</name>
        <dbReference type="ChEBI" id="CHEBI:57783"/>
    </ligand>
</feature>
<feature type="binding site" evidence="1">
    <location>
        <position position="26"/>
    </location>
    <ligand>
        <name>NADPH</name>
        <dbReference type="ChEBI" id="CHEBI:57783"/>
    </ligand>
</feature>
<feature type="binding site" evidence="1">
    <location>
        <position position="27"/>
    </location>
    <ligand>
        <name>NADPH</name>
        <dbReference type="ChEBI" id="CHEBI:57783"/>
    </ligand>
</feature>
<feature type="binding site" evidence="1">
    <location>
        <position position="28"/>
    </location>
    <ligand>
        <name>NADPH</name>
        <dbReference type="ChEBI" id="CHEBI:57783"/>
    </ligand>
</feature>
<feature type="binding site" evidence="1">
    <location>
        <position position="52"/>
    </location>
    <ligand>
        <name>NADPH</name>
        <dbReference type="ChEBI" id="CHEBI:57783"/>
    </ligand>
</feature>
<feature type="binding site" evidence="1">
    <location>
        <position position="53"/>
    </location>
    <ligand>
        <name>NADPH</name>
        <dbReference type="ChEBI" id="CHEBI:57783"/>
    </ligand>
</feature>
<feature type="binding site" evidence="1">
    <location>
        <position position="136"/>
    </location>
    <ligand>
        <name>NADPH</name>
        <dbReference type="ChEBI" id="CHEBI:57783"/>
    </ligand>
</feature>
<feature type="binding site" evidence="1">
    <location>
        <position position="137"/>
    </location>
    <ligand>
        <name>1-deoxy-D-xylulose 5-phosphate</name>
        <dbReference type="ChEBI" id="CHEBI:57792"/>
    </ligand>
</feature>
<feature type="binding site" evidence="1">
    <location>
        <position position="138"/>
    </location>
    <ligand>
        <name>NADPH</name>
        <dbReference type="ChEBI" id="CHEBI:57783"/>
    </ligand>
</feature>
<feature type="binding site" evidence="1">
    <location>
        <position position="162"/>
    </location>
    <ligand>
        <name>Mn(2+)</name>
        <dbReference type="ChEBI" id="CHEBI:29035"/>
    </ligand>
</feature>
<feature type="binding site" evidence="1">
    <location>
        <position position="163"/>
    </location>
    <ligand>
        <name>1-deoxy-D-xylulose 5-phosphate</name>
        <dbReference type="ChEBI" id="CHEBI:57792"/>
    </ligand>
</feature>
<feature type="binding site" evidence="1">
    <location>
        <position position="164"/>
    </location>
    <ligand>
        <name>1-deoxy-D-xylulose 5-phosphate</name>
        <dbReference type="ChEBI" id="CHEBI:57792"/>
    </ligand>
</feature>
<feature type="binding site" evidence="1">
    <location>
        <position position="164"/>
    </location>
    <ligand>
        <name>Mn(2+)</name>
        <dbReference type="ChEBI" id="CHEBI:29035"/>
    </ligand>
</feature>
<feature type="binding site" evidence="1">
    <location>
        <position position="188"/>
    </location>
    <ligand>
        <name>1-deoxy-D-xylulose 5-phosphate</name>
        <dbReference type="ChEBI" id="CHEBI:57792"/>
    </ligand>
</feature>
<feature type="binding site" evidence="1">
    <location>
        <position position="211"/>
    </location>
    <ligand>
        <name>1-deoxy-D-xylulose 5-phosphate</name>
        <dbReference type="ChEBI" id="CHEBI:57792"/>
    </ligand>
</feature>
<feature type="binding site" evidence="1">
    <location>
        <position position="217"/>
    </location>
    <ligand>
        <name>NADPH</name>
        <dbReference type="ChEBI" id="CHEBI:57783"/>
    </ligand>
</feature>
<feature type="binding site" evidence="1">
    <location>
        <position position="224"/>
    </location>
    <ligand>
        <name>1-deoxy-D-xylulose 5-phosphate</name>
        <dbReference type="ChEBI" id="CHEBI:57792"/>
    </ligand>
</feature>
<feature type="binding site" evidence="1">
    <location>
        <position position="229"/>
    </location>
    <ligand>
        <name>1-deoxy-D-xylulose 5-phosphate</name>
        <dbReference type="ChEBI" id="CHEBI:57792"/>
    </ligand>
</feature>
<feature type="binding site" evidence="1">
    <location>
        <position position="230"/>
    </location>
    <ligand>
        <name>1-deoxy-D-xylulose 5-phosphate</name>
        <dbReference type="ChEBI" id="CHEBI:57792"/>
    </ligand>
</feature>
<feature type="binding site" evidence="1">
    <location>
        <position position="233"/>
    </location>
    <ligand>
        <name>1-deoxy-D-xylulose 5-phosphate</name>
        <dbReference type="ChEBI" id="CHEBI:57792"/>
    </ligand>
</feature>
<feature type="binding site" evidence="1">
    <location>
        <position position="233"/>
    </location>
    <ligand>
        <name>Mn(2+)</name>
        <dbReference type="ChEBI" id="CHEBI:29035"/>
    </ligand>
</feature>
<gene>
    <name evidence="1" type="primary">dxr</name>
    <name type="ordered locus">RC1_1202</name>
</gene>
<accession>B6ISU5</accession>
<organism>
    <name type="scientific">Rhodospirillum centenum (strain ATCC 51521 / SW)</name>
    <dbReference type="NCBI Taxonomy" id="414684"/>
    <lineage>
        <taxon>Bacteria</taxon>
        <taxon>Pseudomonadati</taxon>
        <taxon>Pseudomonadota</taxon>
        <taxon>Alphaproteobacteria</taxon>
        <taxon>Rhodospirillales</taxon>
        <taxon>Rhodospirillaceae</taxon>
        <taxon>Rhodospirillum</taxon>
    </lineage>
</organism>